<dbReference type="EMBL" id="AL513382">
    <property type="protein sequence ID" value="CAD09159.1"/>
    <property type="molecule type" value="Genomic_DNA"/>
</dbReference>
<dbReference type="EMBL" id="AE014613">
    <property type="protein sequence ID" value="AAO71545.1"/>
    <property type="molecule type" value="Genomic_DNA"/>
</dbReference>
<dbReference type="RefSeq" id="NP_458473.1">
    <property type="nucleotide sequence ID" value="NC_003198.1"/>
</dbReference>
<dbReference type="RefSeq" id="WP_001118932.1">
    <property type="nucleotide sequence ID" value="NZ_WSUR01000046.1"/>
</dbReference>
<dbReference type="SMR" id="P66410"/>
<dbReference type="STRING" id="220341.gene:17588199"/>
<dbReference type="GeneID" id="66757762"/>
<dbReference type="KEGG" id="stt:t4078"/>
<dbReference type="KEGG" id="sty:STY4371"/>
<dbReference type="PATRIC" id="fig|220341.7.peg.4467"/>
<dbReference type="eggNOG" id="COG0199">
    <property type="taxonomic scope" value="Bacteria"/>
</dbReference>
<dbReference type="HOGENOM" id="CLU_139869_0_1_6"/>
<dbReference type="OMA" id="FGLCRNQ"/>
<dbReference type="OrthoDB" id="9810484at2"/>
<dbReference type="Proteomes" id="UP000000541">
    <property type="component" value="Chromosome"/>
</dbReference>
<dbReference type="Proteomes" id="UP000002670">
    <property type="component" value="Chromosome"/>
</dbReference>
<dbReference type="GO" id="GO:0005737">
    <property type="term" value="C:cytoplasm"/>
    <property type="evidence" value="ECO:0007669"/>
    <property type="project" value="UniProtKB-ARBA"/>
</dbReference>
<dbReference type="GO" id="GO:0015935">
    <property type="term" value="C:small ribosomal subunit"/>
    <property type="evidence" value="ECO:0007669"/>
    <property type="project" value="TreeGrafter"/>
</dbReference>
<dbReference type="GO" id="GO:0019843">
    <property type="term" value="F:rRNA binding"/>
    <property type="evidence" value="ECO:0007669"/>
    <property type="project" value="UniProtKB-UniRule"/>
</dbReference>
<dbReference type="GO" id="GO:0003735">
    <property type="term" value="F:structural constituent of ribosome"/>
    <property type="evidence" value="ECO:0007669"/>
    <property type="project" value="InterPro"/>
</dbReference>
<dbReference type="GO" id="GO:0006412">
    <property type="term" value="P:translation"/>
    <property type="evidence" value="ECO:0007669"/>
    <property type="project" value="UniProtKB-UniRule"/>
</dbReference>
<dbReference type="FunFam" id="1.10.287.1480:FF:000001">
    <property type="entry name" value="30S ribosomal protein S14"/>
    <property type="match status" value="1"/>
</dbReference>
<dbReference type="Gene3D" id="1.10.287.1480">
    <property type="match status" value="1"/>
</dbReference>
<dbReference type="HAMAP" id="MF_00537">
    <property type="entry name" value="Ribosomal_uS14_1"/>
    <property type="match status" value="1"/>
</dbReference>
<dbReference type="InterPro" id="IPR001209">
    <property type="entry name" value="Ribosomal_uS14"/>
</dbReference>
<dbReference type="InterPro" id="IPR023036">
    <property type="entry name" value="Ribosomal_uS14_bac/plastid"/>
</dbReference>
<dbReference type="InterPro" id="IPR018271">
    <property type="entry name" value="Ribosomal_uS14_CS"/>
</dbReference>
<dbReference type="NCBIfam" id="NF006477">
    <property type="entry name" value="PRK08881.1"/>
    <property type="match status" value="1"/>
</dbReference>
<dbReference type="PANTHER" id="PTHR19836">
    <property type="entry name" value="30S RIBOSOMAL PROTEIN S14"/>
    <property type="match status" value="1"/>
</dbReference>
<dbReference type="PANTHER" id="PTHR19836:SF19">
    <property type="entry name" value="SMALL RIBOSOMAL SUBUNIT PROTEIN US14M"/>
    <property type="match status" value="1"/>
</dbReference>
<dbReference type="Pfam" id="PF00253">
    <property type="entry name" value="Ribosomal_S14"/>
    <property type="match status" value="1"/>
</dbReference>
<dbReference type="SUPFAM" id="SSF57716">
    <property type="entry name" value="Glucocorticoid receptor-like (DNA-binding domain)"/>
    <property type="match status" value="1"/>
</dbReference>
<dbReference type="PROSITE" id="PS00527">
    <property type="entry name" value="RIBOSOMAL_S14"/>
    <property type="match status" value="1"/>
</dbReference>
<keyword id="KW-0687">Ribonucleoprotein</keyword>
<keyword id="KW-0689">Ribosomal protein</keyword>
<keyword id="KW-0694">RNA-binding</keyword>
<keyword id="KW-0699">rRNA-binding</keyword>
<sequence>MAKQSMKAREVKRVALADKYFAKRAELKAIISDVNATDEDRWNAVLKLQTLPRDSSPSRQRNRCRQTGRPHAFLRKFGLSRIKVREAAMRGEIPGLKKASW</sequence>
<proteinExistence type="inferred from homology"/>
<gene>
    <name evidence="2" type="primary">rpsN</name>
    <name type="ordered locus">STY4371</name>
    <name type="ordered locus">t4078</name>
</gene>
<reference key="1">
    <citation type="journal article" date="2001" name="Nature">
        <title>Complete genome sequence of a multiple drug resistant Salmonella enterica serovar Typhi CT18.</title>
        <authorList>
            <person name="Parkhill J."/>
            <person name="Dougan G."/>
            <person name="James K.D."/>
            <person name="Thomson N.R."/>
            <person name="Pickard D."/>
            <person name="Wain J."/>
            <person name="Churcher C.M."/>
            <person name="Mungall K.L."/>
            <person name="Bentley S.D."/>
            <person name="Holden M.T.G."/>
            <person name="Sebaihia M."/>
            <person name="Baker S."/>
            <person name="Basham D."/>
            <person name="Brooks K."/>
            <person name="Chillingworth T."/>
            <person name="Connerton P."/>
            <person name="Cronin A."/>
            <person name="Davis P."/>
            <person name="Davies R.M."/>
            <person name="Dowd L."/>
            <person name="White N."/>
            <person name="Farrar J."/>
            <person name="Feltwell T."/>
            <person name="Hamlin N."/>
            <person name="Haque A."/>
            <person name="Hien T.T."/>
            <person name="Holroyd S."/>
            <person name="Jagels K."/>
            <person name="Krogh A."/>
            <person name="Larsen T.S."/>
            <person name="Leather S."/>
            <person name="Moule S."/>
            <person name="O'Gaora P."/>
            <person name="Parry C."/>
            <person name="Quail M.A."/>
            <person name="Rutherford K.M."/>
            <person name="Simmonds M."/>
            <person name="Skelton J."/>
            <person name="Stevens K."/>
            <person name="Whitehead S."/>
            <person name="Barrell B.G."/>
        </authorList>
    </citation>
    <scope>NUCLEOTIDE SEQUENCE [LARGE SCALE GENOMIC DNA]</scope>
    <source>
        <strain>CT18</strain>
    </source>
</reference>
<reference key="2">
    <citation type="journal article" date="2003" name="J. Bacteriol.">
        <title>Comparative genomics of Salmonella enterica serovar Typhi strains Ty2 and CT18.</title>
        <authorList>
            <person name="Deng W."/>
            <person name="Liou S.-R."/>
            <person name="Plunkett G. III"/>
            <person name="Mayhew G.F."/>
            <person name="Rose D.J."/>
            <person name="Burland V."/>
            <person name="Kodoyianni V."/>
            <person name="Schwartz D.C."/>
            <person name="Blattner F.R."/>
        </authorList>
    </citation>
    <scope>NUCLEOTIDE SEQUENCE [LARGE SCALE GENOMIC DNA]</scope>
    <source>
        <strain>ATCC 700931 / Ty2</strain>
    </source>
</reference>
<feature type="initiator methionine" description="Removed" evidence="1">
    <location>
        <position position="1"/>
    </location>
</feature>
<feature type="chain" id="PRO_0000130924" description="Small ribosomal subunit protein uS14">
    <location>
        <begin position="2"/>
        <end position="101"/>
    </location>
</feature>
<evidence type="ECO:0000250" key="1"/>
<evidence type="ECO:0000255" key="2">
    <source>
        <dbReference type="HAMAP-Rule" id="MF_00537"/>
    </source>
</evidence>
<evidence type="ECO:0000305" key="3"/>
<name>RS14_SALTI</name>
<organism>
    <name type="scientific">Salmonella typhi</name>
    <dbReference type="NCBI Taxonomy" id="90370"/>
    <lineage>
        <taxon>Bacteria</taxon>
        <taxon>Pseudomonadati</taxon>
        <taxon>Pseudomonadota</taxon>
        <taxon>Gammaproteobacteria</taxon>
        <taxon>Enterobacterales</taxon>
        <taxon>Enterobacteriaceae</taxon>
        <taxon>Salmonella</taxon>
    </lineage>
</organism>
<comment type="function">
    <text evidence="2">Binds 16S rRNA, required for the assembly of 30S particles and may also be responsible for determining the conformation of the 16S rRNA at the A site.</text>
</comment>
<comment type="subunit">
    <text evidence="2">Part of the 30S ribosomal subunit. Contacts proteins S3 and S10.</text>
</comment>
<comment type="similarity">
    <text evidence="2">Belongs to the universal ribosomal protein uS14 family.</text>
</comment>
<protein>
    <recommendedName>
        <fullName evidence="2">Small ribosomal subunit protein uS14</fullName>
    </recommendedName>
    <alternativeName>
        <fullName evidence="3">30S ribosomal protein S14</fullName>
    </alternativeName>
</protein>
<accession>P66410</accession>
<accession>Q8XEW0</accession>